<keyword id="KW-0255">Endonuclease</keyword>
<keyword id="KW-0378">Hydrolase</keyword>
<keyword id="KW-0540">Nuclease</keyword>
<keyword id="KW-0680">Restriction system</keyword>
<name>T2S9_STAAU</name>
<organism>
    <name type="scientific">Staphylococcus aureus</name>
    <dbReference type="NCBI Taxonomy" id="1280"/>
    <lineage>
        <taxon>Bacteria</taxon>
        <taxon>Bacillati</taxon>
        <taxon>Bacillota</taxon>
        <taxon>Bacilli</taxon>
        <taxon>Bacillales</taxon>
        <taxon>Staphylococcaceae</taxon>
        <taxon>Staphylococcus</taxon>
    </lineage>
</organism>
<sequence>MTNKYLSFITDEDLFECIEFLYTEYEKALEGIDFDKFFKNRIDTFKMTFDMGINNLSEQDWLAAELQRQVEKTITNHVGTFHEKLIGKIEGYTNYPVGYDYDVAKDDNTLFAEIKNKHNTLTGTHTKSLFQKICGYAEKYPDAICYYVRIIDTKSRNDIWEFRSGSIDENTREKPRFSHPRVRIASGDQFYKIVTGEEDAFKQLAYNIPIALDDWIETKRAKKGSSLGLFAELYQQAKANNRTLSEEIISINYPKSNYISF</sequence>
<dbReference type="EC" id="3.1.21.4"/>
<dbReference type="EMBL" id="X53096">
    <property type="protein sequence ID" value="CAA37259.1"/>
    <property type="molecule type" value="Genomic_DNA"/>
</dbReference>
<dbReference type="PIR" id="S12706">
    <property type="entry name" value="S12706"/>
</dbReference>
<dbReference type="RefSeq" id="WP_000182778.1">
    <property type="nucleotide sequence ID" value="NZ_WKGE01000019.1"/>
</dbReference>
<dbReference type="REBASE" id="1607">
    <property type="entry name" value="Sau96I"/>
</dbReference>
<dbReference type="PATRIC" id="fig|1280.3540.peg.2443"/>
<dbReference type="BRENDA" id="3.1.21.4">
    <property type="organism ID" value="3352"/>
</dbReference>
<dbReference type="PRO" id="PR:P23736"/>
<dbReference type="GO" id="GO:0003677">
    <property type="term" value="F:DNA binding"/>
    <property type="evidence" value="ECO:0007669"/>
    <property type="project" value="InterPro"/>
</dbReference>
<dbReference type="GO" id="GO:0009036">
    <property type="term" value="F:type II site-specific deoxyribonuclease activity"/>
    <property type="evidence" value="ECO:0007669"/>
    <property type="project" value="UniProtKB-EC"/>
</dbReference>
<dbReference type="GO" id="GO:0009307">
    <property type="term" value="P:DNA restriction-modification system"/>
    <property type="evidence" value="ECO:0007669"/>
    <property type="project" value="UniProtKB-KW"/>
</dbReference>
<dbReference type="InterPro" id="IPR019057">
    <property type="entry name" value="Restrct_endonuc_II_Eco47II"/>
</dbReference>
<dbReference type="Pfam" id="PF09553">
    <property type="entry name" value="RE_Eco47II"/>
    <property type="match status" value="1"/>
</dbReference>
<comment type="function">
    <text evidence="1 2">A P subtype restriction enzyme that recognizes the double-stranded sequence 5'-GGNCC-3' and cleaves after G-1.</text>
</comment>
<comment type="catalytic activity">
    <reaction>
        <text>Endonucleolytic cleavage of DNA to give specific double-stranded fragments with terminal 5'-phosphates.</text>
        <dbReference type="EC" id="3.1.21.4"/>
    </reaction>
</comment>
<comment type="subunit">
    <text evidence="4">Monomer.</text>
</comment>
<reference key="1">
    <citation type="journal article" date="1990" name="Nucleic Acids Res.">
        <title>Cloning and nucleotide sequence of the genes coding for the Sau96I restriction and modification enzymes.</title>
        <authorList>
            <person name="Szilak L."/>
            <person name="Venetianer P."/>
            <person name="Kiss A."/>
        </authorList>
    </citation>
    <scope>NUCLEOTIDE SEQUENCE [GENOMIC DNA]</scope>
    <scope>FUNCTION</scope>
    <scope>SUBUNIT</scope>
    <source>
        <strain>PS96</strain>
    </source>
</reference>
<reference key="2">
    <citation type="journal article" date="2003" name="Nucleic Acids Res.">
        <title>A nomenclature for restriction enzymes, DNA methyltransferases, homing endonucleases and their genes.</title>
        <authorList>
            <person name="Roberts R.J."/>
            <person name="Belfort M."/>
            <person name="Bestor T."/>
            <person name="Bhagwat A.S."/>
            <person name="Bickle T.A."/>
            <person name="Bitinaite J."/>
            <person name="Blumenthal R.M."/>
            <person name="Degtyarev S.K."/>
            <person name="Dryden D.T."/>
            <person name="Dybvig K."/>
            <person name="Firman K."/>
            <person name="Gromova E.S."/>
            <person name="Gumport R.I."/>
            <person name="Halford S.E."/>
            <person name="Hattman S."/>
            <person name="Heitman J."/>
            <person name="Hornby D.P."/>
            <person name="Janulaitis A."/>
            <person name="Jeltsch A."/>
            <person name="Josephsen J."/>
            <person name="Kiss A."/>
            <person name="Klaenhammer T.R."/>
            <person name="Kobayashi I."/>
            <person name="Kong H."/>
            <person name="Krueger D.H."/>
            <person name="Lacks S."/>
            <person name="Marinus M.G."/>
            <person name="Miyahara M."/>
            <person name="Morgan R.D."/>
            <person name="Murray N.E."/>
            <person name="Nagaraja V."/>
            <person name="Piekarowicz A."/>
            <person name="Pingoud A."/>
            <person name="Raleigh E."/>
            <person name="Rao D.N."/>
            <person name="Reich N."/>
            <person name="Repin V.E."/>
            <person name="Selker E.U."/>
            <person name="Shaw P.C."/>
            <person name="Stein D.C."/>
            <person name="Stoddard B.L."/>
            <person name="Szybalski W."/>
            <person name="Trautner T.A."/>
            <person name="Van Etten J.L."/>
            <person name="Vitor J.M."/>
            <person name="Wilson G.G."/>
            <person name="Xu S.Y."/>
        </authorList>
    </citation>
    <scope>NOMENCLATURE</scope>
    <scope>SUBTYPE</scope>
</reference>
<gene>
    <name evidence="3" type="primary">sau96IR</name>
</gene>
<feature type="chain" id="PRO_0000077359" description="Type II restriction enzyme Sau96I">
    <location>
        <begin position="1"/>
        <end position="261"/>
    </location>
</feature>
<proteinExistence type="evidence at protein level"/>
<accession>P23736</accession>
<protein>
    <recommendedName>
        <fullName evidence="2">Type II restriction enzyme Sau96I</fullName>
        <shortName>R.Sau96I</shortName>
        <ecNumber>3.1.21.4</ecNumber>
    </recommendedName>
    <alternativeName>
        <fullName>Endonuclease Sau96I</fullName>
    </alternativeName>
    <alternativeName>
        <fullName>Type-2 restriction enzyme Sau96I</fullName>
    </alternativeName>
</protein>
<evidence type="ECO:0000269" key="1">
    <source>
    </source>
</evidence>
<evidence type="ECO:0000303" key="2">
    <source>
    </source>
</evidence>
<evidence type="ECO:0000303" key="3">
    <source>
    </source>
</evidence>
<evidence type="ECO:0000305" key="4">
    <source>
    </source>
</evidence>